<protein>
    <recommendedName>
        <fullName>Tyrosine--tRNA ligase, mitochondrial</fullName>
        <ecNumber>6.1.1.1</ecNumber>
    </recommendedName>
    <alternativeName>
        <fullName>Tyrosyl-tRNA synthetase</fullName>
        <shortName>TyrRS</shortName>
    </alternativeName>
</protein>
<gene>
    <name type="primary">YTS1</name>
</gene>
<name>SYYM_PODAS</name>
<reference key="1">
    <citation type="journal article" date="1992" name="Mol. Cell. Biol.">
        <title>The mitochondrial tyrosyl-tRNA synthetase of Podospora anserina is a bifunctional enzyme active in protein synthesis and RNA splicing.</title>
        <authorList>
            <person name="Kaempfer U."/>
            <person name="Kueck U."/>
            <person name="Cherniak A.D."/>
            <person name="Lambowitz A.M."/>
        </authorList>
    </citation>
    <scope>NUCLEOTIDE SEQUENCE [GENOMIC DNA]</scope>
    <source>
        <strain>s</strain>
    </source>
</reference>
<sequence length="640" mass="72406">MSMSRGSVCRRCLLTMKSMAGGGPTSTYAQQRGKKTWHGPKYQAKIDQAQADWEERAEKIKKGEIQHTWDMFVERGYVKDTAGSHETIRKLMLHKRIGAYTGIDPTAPSLHIGHLLPLMPIFWMYMHGYAGYTLIGGATAKIGDPTDRLVSRTPLKRTDLTMNLTKIHYQLKALWMNVEEQARRRGFEKDWAWKRAVVNNSTWWNSLPLIEVLKRLGDSMRMGPLLSRDTVKNKMSKGDGMSFSEFTYPLMQGWDWWHMYQANGIQMQIGGSDQYGNIVTGVETVKVVRDNEPDPAKKIEGGPFNDPVGFTVPLLTDSAGVKFGKSAGNAFLDKFQTSEFDLYGYFVRRSDQEVEKLLKLFTFLPMENINEAMKIHSENPARRVAQHLLAFEVVGLVHGMNAAHRTALNHQARYGKQIDIPGVTLRMPKAATEDTPPSILDAPKMDMQLPESLIMGKSIGRILYAAGLAKSASEGHRLATQQGAYIGAMPGHKRTEDNKVMDYSQLSFTPIKLWFPQETRNYLIDGKLLILRKGKVQIRVIEMVSDEEWKESGQTYPGEPGTGALRMLRQQLKMLKSGMLTPDEVKANLKNHVEEEAPPPGFMKFPDQDSYAIRRATQELMDEIHQKEVGGDSPREERRE</sequence>
<feature type="transit peptide" description="Mitochondrion" evidence="3">
    <location>
        <begin position="1"/>
        <end status="unknown"/>
    </location>
</feature>
<feature type="chain" id="PRO_0000035834" description="Tyrosine--tRNA ligase, mitochondrial">
    <location>
        <begin status="unknown"/>
        <end position="640"/>
    </location>
</feature>
<feature type="short sequence motif" description="'HIGH' region">
    <location>
        <begin position="105"/>
        <end position="114"/>
    </location>
</feature>
<feature type="short sequence motif" description="'KMSKS' region">
    <location>
        <begin position="322"/>
        <end position="326"/>
    </location>
</feature>
<feature type="binding site" evidence="2">
    <location>
        <position position="100"/>
    </location>
    <ligand>
        <name>L-tyrosine</name>
        <dbReference type="ChEBI" id="CHEBI:58315"/>
    </ligand>
</feature>
<feature type="binding site" evidence="2">
    <location>
        <position position="104"/>
    </location>
    <ligand>
        <name>ATP</name>
        <dbReference type="ChEBI" id="CHEBI:30616"/>
    </ligand>
</feature>
<feature type="binding site" evidence="2">
    <location>
        <position position="144"/>
    </location>
    <ligand>
        <name>L-tyrosine</name>
        <dbReference type="ChEBI" id="CHEBI:58315"/>
    </ligand>
</feature>
<feature type="binding site" evidence="2">
    <location>
        <position position="248"/>
    </location>
    <ligand>
        <name>L-tyrosine</name>
        <dbReference type="ChEBI" id="CHEBI:58315"/>
    </ligand>
</feature>
<feature type="binding site" evidence="2">
    <location>
        <position position="252"/>
    </location>
    <ligand>
        <name>L-tyrosine</name>
        <dbReference type="ChEBI" id="CHEBI:58315"/>
    </ligand>
</feature>
<feature type="binding site" evidence="2">
    <location>
        <position position="255"/>
    </location>
    <ligand>
        <name>L-tyrosine</name>
        <dbReference type="ChEBI" id="CHEBI:58315"/>
    </ligand>
</feature>
<feature type="binding site" evidence="2">
    <location>
        <position position="274"/>
    </location>
    <ligand>
        <name>L-tyrosine</name>
        <dbReference type="ChEBI" id="CHEBI:58315"/>
    </ligand>
</feature>
<feature type="binding site" evidence="1">
    <location>
        <position position="325"/>
    </location>
    <ligand>
        <name>ATP</name>
        <dbReference type="ChEBI" id="CHEBI:30616"/>
    </ligand>
</feature>
<evidence type="ECO:0000250" key="1"/>
<evidence type="ECO:0000250" key="2">
    <source>
        <dbReference type="UniProtKB" id="Q9Y2Z4"/>
    </source>
</evidence>
<evidence type="ECO:0000255" key="3"/>
<evidence type="ECO:0000305" key="4"/>
<organism>
    <name type="scientific">Podospora anserina</name>
    <name type="common">Pleurage anserina</name>
    <dbReference type="NCBI Taxonomy" id="2587412"/>
    <lineage>
        <taxon>Eukaryota</taxon>
        <taxon>Fungi</taxon>
        <taxon>Dikarya</taxon>
        <taxon>Ascomycota</taxon>
        <taxon>Pezizomycotina</taxon>
        <taxon>Sordariomycetes</taxon>
        <taxon>Sordariomycetidae</taxon>
        <taxon>Sordariales</taxon>
        <taxon>Podosporaceae</taxon>
        <taxon>Podospora</taxon>
    </lineage>
</organism>
<comment type="function">
    <text>Has both an aminoacyl-tRNA synthetase activity and is involved in the splicing of group I introns.</text>
</comment>
<comment type="catalytic activity">
    <reaction>
        <text>tRNA(Tyr) + L-tyrosine + ATP = L-tyrosyl-tRNA(Tyr) + AMP + diphosphate + H(+)</text>
        <dbReference type="Rhea" id="RHEA:10220"/>
        <dbReference type="Rhea" id="RHEA-COMP:9706"/>
        <dbReference type="Rhea" id="RHEA-COMP:9707"/>
        <dbReference type="ChEBI" id="CHEBI:15378"/>
        <dbReference type="ChEBI" id="CHEBI:30616"/>
        <dbReference type="ChEBI" id="CHEBI:33019"/>
        <dbReference type="ChEBI" id="CHEBI:58315"/>
        <dbReference type="ChEBI" id="CHEBI:78442"/>
        <dbReference type="ChEBI" id="CHEBI:78536"/>
        <dbReference type="ChEBI" id="CHEBI:456215"/>
        <dbReference type="EC" id="6.1.1.1"/>
    </reaction>
</comment>
<comment type="subcellular location">
    <subcellularLocation>
        <location>Mitochondrion matrix</location>
    </subcellularLocation>
</comment>
<comment type="similarity">
    <text evidence="4">Belongs to the class-I aminoacyl-tRNA synthetase family.</text>
</comment>
<dbReference type="EC" id="6.1.1.1"/>
<dbReference type="EMBL" id="X54981">
    <property type="protein sequence ID" value="CAA38725.1"/>
    <property type="molecule type" value="Genomic_DNA"/>
</dbReference>
<dbReference type="PIR" id="A42019">
    <property type="entry name" value="A42019"/>
</dbReference>
<dbReference type="SMR" id="P28669"/>
<dbReference type="VEuPathDB" id="FungiDB:PODANS_1_3320"/>
<dbReference type="GO" id="GO:0005829">
    <property type="term" value="C:cytosol"/>
    <property type="evidence" value="ECO:0007669"/>
    <property type="project" value="TreeGrafter"/>
</dbReference>
<dbReference type="GO" id="GO:0005759">
    <property type="term" value="C:mitochondrial matrix"/>
    <property type="evidence" value="ECO:0007669"/>
    <property type="project" value="UniProtKB-SubCell"/>
</dbReference>
<dbReference type="GO" id="GO:0005524">
    <property type="term" value="F:ATP binding"/>
    <property type="evidence" value="ECO:0007669"/>
    <property type="project" value="UniProtKB-KW"/>
</dbReference>
<dbReference type="GO" id="GO:0003723">
    <property type="term" value="F:RNA binding"/>
    <property type="evidence" value="ECO:0007669"/>
    <property type="project" value="InterPro"/>
</dbReference>
<dbReference type="GO" id="GO:0004831">
    <property type="term" value="F:tyrosine-tRNA ligase activity"/>
    <property type="evidence" value="ECO:0007669"/>
    <property type="project" value="UniProtKB-EC"/>
</dbReference>
<dbReference type="GO" id="GO:0006397">
    <property type="term" value="P:mRNA processing"/>
    <property type="evidence" value="ECO:0007669"/>
    <property type="project" value="UniProtKB-KW"/>
</dbReference>
<dbReference type="GO" id="GO:0006437">
    <property type="term" value="P:tyrosyl-tRNA aminoacylation"/>
    <property type="evidence" value="ECO:0007669"/>
    <property type="project" value="InterPro"/>
</dbReference>
<dbReference type="CDD" id="cd00805">
    <property type="entry name" value="TyrRS_core"/>
    <property type="match status" value="1"/>
</dbReference>
<dbReference type="FunFam" id="1.10.240.10:FF:000001">
    <property type="entry name" value="Tyrosine--tRNA ligase"/>
    <property type="match status" value="1"/>
</dbReference>
<dbReference type="FunFam" id="3.40.50.620:FF:000227">
    <property type="entry name" value="Tyrosine--tRNA ligase"/>
    <property type="match status" value="1"/>
</dbReference>
<dbReference type="Gene3D" id="3.40.50.620">
    <property type="entry name" value="HUPs"/>
    <property type="match status" value="1"/>
</dbReference>
<dbReference type="Gene3D" id="3.10.290.10">
    <property type="entry name" value="RNA-binding S4 domain"/>
    <property type="match status" value="1"/>
</dbReference>
<dbReference type="Gene3D" id="1.10.240.10">
    <property type="entry name" value="Tyrosyl-Transfer RNA Synthetase"/>
    <property type="match status" value="1"/>
</dbReference>
<dbReference type="InterPro" id="IPR001412">
    <property type="entry name" value="aa-tRNA-synth_I_CS"/>
</dbReference>
<dbReference type="InterPro" id="IPR002305">
    <property type="entry name" value="aa-tRNA-synth_Ic"/>
</dbReference>
<dbReference type="InterPro" id="IPR014729">
    <property type="entry name" value="Rossmann-like_a/b/a_fold"/>
</dbReference>
<dbReference type="InterPro" id="IPR036986">
    <property type="entry name" value="S4_RNA-bd_sf"/>
</dbReference>
<dbReference type="InterPro" id="IPR002307">
    <property type="entry name" value="Tyr-tRNA-ligase"/>
</dbReference>
<dbReference type="InterPro" id="IPR024088">
    <property type="entry name" value="Tyr-tRNA-ligase_bac-type"/>
</dbReference>
<dbReference type="InterPro" id="IPR032005">
    <property type="entry name" value="TyrRSs_C"/>
</dbReference>
<dbReference type="NCBIfam" id="TIGR00234">
    <property type="entry name" value="tyrS"/>
    <property type="match status" value="1"/>
</dbReference>
<dbReference type="PANTHER" id="PTHR11766:SF0">
    <property type="entry name" value="TYROSINE--TRNA LIGASE, MITOCHONDRIAL"/>
    <property type="match status" value="1"/>
</dbReference>
<dbReference type="PANTHER" id="PTHR11766">
    <property type="entry name" value="TYROSYL-TRNA SYNTHETASE"/>
    <property type="match status" value="1"/>
</dbReference>
<dbReference type="Pfam" id="PF00579">
    <property type="entry name" value="tRNA-synt_1b"/>
    <property type="match status" value="1"/>
</dbReference>
<dbReference type="Pfam" id="PF16714">
    <property type="entry name" value="TyrRSs_C"/>
    <property type="match status" value="1"/>
</dbReference>
<dbReference type="PRINTS" id="PR01040">
    <property type="entry name" value="TRNASYNTHTYR"/>
</dbReference>
<dbReference type="SUPFAM" id="SSF52374">
    <property type="entry name" value="Nucleotidylyl transferase"/>
    <property type="match status" value="1"/>
</dbReference>
<dbReference type="PROSITE" id="PS00178">
    <property type="entry name" value="AA_TRNA_LIGASE_I"/>
    <property type="match status" value="1"/>
</dbReference>
<keyword id="KW-0030">Aminoacyl-tRNA synthetase</keyword>
<keyword id="KW-0067">ATP-binding</keyword>
<keyword id="KW-0436">Ligase</keyword>
<keyword id="KW-0496">Mitochondrion</keyword>
<keyword id="KW-0507">mRNA processing</keyword>
<keyword id="KW-0547">Nucleotide-binding</keyword>
<keyword id="KW-0648">Protein biosynthesis</keyword>
<keyword id="KW-0809">Transit peptide</keyword>
<accession>P28669</accession>
<proteinExistence type="inferred from homology"/>